<organism>
    <name type="scientific">Chromobacterium violaceum (strain ATCC 12472 / DSM 30191 / JCM 1249 / CCUG 213 / NBRC 12614 / NCIMB 9131 / NCTC 9757 / MK)</name>
    <dbReference type="NCBI Taxonomy" id="243365"/>
    <lineage>
        <taxon>Bacteria</taxon>
        <taxon>Pseudomonadati</taxon>
        <taxon>Pseudomonadota</taxon>
        <taxon>Betaproteobacteria</taxon>
        <taxon>Neisseriales</taxon>
        <taxon>Chromobacteriaceae</taxon>
        <taxon>Chromobacterium</taxon>
    </lineage>
</organism>
<proteinExistence type="inferred from homology"/>
<comment type="function">
    <text evidence="1">With S4 and S12 plays an important role in translational accuracy.</text>
</comment>
<comment type="function">
    <text evidence="1">Located at the back of the 30S subunit body where it stabilizes the conformation of the head with respect to the body.</text>
</comment>
<comment type="subunit">
    <text evidence="1">Part of the 30S ribosomal subunit. Contacts proteins S4 and S8.</text>
</comment>
<comment type="domain">
    <text>The N-terminal domain interacts with the head of the 30S subunit; the C-terminal domain interacts with the body and contacts protein S4. The interaction surface between S4 and S5 is involved in control of translational fidelity.</text>
</comment>
<comment type="similarity">
    <text evidence="1">Belongs to the universal ribosomal protein uS5 family.</text>
</comment>
<keyword id="KW-1185">Reference proteome</keyword>
<keyword id="KW-0687">Ribonucleoprotein</keyword>
<keyword id="KW-0689">Ribosomal protein</keyword>
<keyword id="KW-0694">RNA-binding</keyword>
<keyword id="KW-0699">rRNA-binding</keyword>
<feature type="chain" id="PRO_0000131501" description="Small ribosomal subunit protein uS5">
    <location>
        <begin position="1"/>
        <end position="172"/>
    </location>
</feature>
<feature type="domain" description="S5 DRBM" evidence="1">
    <location>
        <begin position="13"/>
        <end position="76"/>
    </location>
</feature>
<accession>Q7NQG9</accession>
<name>RS5_CHRVO</name>
<reference key="1">
    <citation type="journal article" date="2003" name="Proc. Natl. Acad. Sci. U.S.A.">
        <title>The complete genome sequence of Chromobacterium violaceum reveals remarkable and exploitable bacterial adaptability.</title>
        <authorList>
            <person name="Vasconcelos A.T.R."/>
            <person name="de Almeida D.F."/>
            <person name="Hungria M."/>
            <person name="Guimaraes C.T."/>
            <person name="Antonio R.V."/>
            <person name="Almeida F.C."/>
            <person name="de Almeida L.G.P."/>
            <person name="de Almeida R."/>
            <person name="Alves-Gomes J.A."/>
            <person name="Andrade E.M."/>
            <person name="Araripe J."/>
            <person name="de Araujo M.F.F."/>
            <person name="Astolfi-Filho S."/>
            <person name="Azevedo V."/>
            <person name="Baptista A.J."/>
            <person name="Bataus L.A.M."/>
            <person name="Batista J.S."/>
            <person name="Belo A."/>
            <person name="van den Berg C."/>
            <person name="Bogo M."/>
            <person name="Bonatto S."/>
            <person name="Bordignon J."/>
            <person name="Brigido M.M."/>
            <person name="Brito C.A."/>
            <person name="Brocchi M."/>
            <person name="Burity H.A."/>
            <person name="Camargo A.A."/>
            <person name="Cardoso D.D.P."/>
            <person name="Carneiro N.P."/>
            <person name="Carraro D.M."/>
            <person name="Carvalho C.M.B."/>
            <person name="Cascardo J.C.M."/>
            <person name="Cavada B.S."/>
            <person name="Chueire L.M.O."/>
            <person name="Creczynski-Pasa T.B."/>
            <person name="Cunha-Junior N.C."/>
            <person name="Fagundes N."/>
            <person name="Falcao C.L."/>
            <person name="Fantinatti F."/>
            <person name="Farias I.P."/>
            <person name="Felipe M.S.S."/>
            <person name="Ferrari L.P."/>
            <person name="Ferro J.A."/>
            <person name="Ferro M.I.T."/>
            <person name="Franco G.R."/>
            <person name="Freitas N.S.A."/>
            <person name="Furlan L.R."/>
            <person name="Gazzinelli R.T."/>
            <person name="Gomes E.A."/>
            <person name="Goncalves P.R."/>
            <person name="Grangeiro T.B."/>
            <person name="Grattapaglia D."/>
            <person name="Grisard E.C."/>
            <person name="Hanna E.S."/>
            <person name="Jardim S.N."/>
            <person name="Laurino J."/>
            <person name="Leoi L.C.T."/>
            <person name="Lima L.F.A."/>
            <person name="Loureiro M.F."/>
            <person name="Lyra M.C.C.P."/>
            <person name="Madeira H.M.F."/>
            <person name="Manfio G.P."/>
            <person name="Maranhao A.Q."/>
            <person name="Martins W.S."/>
            <person name="di Mauro S.M.Z."/>
            <person name="de Medeiros S.R.B."/>
            <person name="Meissner R.V."/>
            <person name="Moreira M.A.M."/>
            <person name="Nascimento F.F."/>
            <person name="Nicolas M.F."/>
            <person name="Oliveira J.G."/>
            <person name="Oliveira S.C."/>
            <person name="Paixao R.F.C."/>
            <person name="Parente J.A."/>
            <person name="Pedrosa F.O."/>
            <person name="Pena S.D.J."/>
            <person name="Pereira J.O."/>
            <person name="Pereira M."/>
            <person name="Pinto L.S.R.C."/>
            <person name="Pinto L.S."/>
            <person name="Porto J.I.R."/>
            <person name="Potrich D.P."/>
            <person name="Ramalho-Neto C.E."/>
            <person name="Reis A.M.M."/>
            <person name="Rigo L.U."/>
            <person name="Rondinelli E."/>
            <person name="Santos E.B.P."/>
            <person name="Santos F.R."/>
            <person name="Schneider M.P.C."/>
            <person name="Seuanez H.N."/>
            <person name="Silva A.M.R."/>
            <person name="da Silva A.L.C."/>
            <person name="Silva D.W."/>
            <person name="Silva R."/>
            <person name="Simoes I.C."/>
            <person name="Simon D."/>
            <person name="Soares C.M.A."/>
            <person name="Soares R.B.A."/>
            <person name="Souza E.M."/>
            <person name="Souza K.R.L."/>
            <person name="Souza R.C."/>
            <person name="Steffens M.B.R."/>
            <person name="Steindel M."/>
            <person name="Teixeira S.R."/>
            <person name="Urmenyi T."/>
            <person name="Vettore A."/>
            <person name="Wassem R."/>
            <person name="Zaha A."/>
            <person name="Simpson A.J.G."/>
        </authorList>
    </citation>
    <scope>NUCLEOTIDE SEQUENCE [LARGE SCALE GENOMIC DNA]</scope>
    <source>
        <strain>ATCC 12472 / DSM 30191 / JCM 1249 / CCUG 213 / NBRC 12614 / NCIMB 9131 / NCTC 9757 / MK</strain>
    </source>
</reference>
<gene>
    <name evidence="1" type="primary">rpsE</name>
    <name type="ordered locus">CV_4169</name>
</gene>
<protein>
    <recommendedName>
        <fullName evidence="1">Small ribosomal subunit protein uS5</fullName>
    </recommendedName>
    <alternativeName>
        <fullName evidence="2">30S ribosomal protein S5</fullName>
    </alternativeName>
</protein>
<sequence length="172" mass="18219">MAKHEMEDRGDGLVEKMISVNRVTKVVKGGRIMAFSALTVVGDGDGGIGMGKGRSKEVPVAVQKAMEQARHNMMKIKLYNGTVKHTVEGRHGATRVLIQPAKDGTGVKAGGPMRAIFDAMGIHNVSAKIHGSTNPYNVVRATLDGLSKINTPAQIAAKRGLSIEDILGVGHE</sequence>
<dbReference type="EMBL" id="AE016825">
    <property type="protein sequence ID" value="AAQ61829.1"/>
    <property type="molecule type" value="Genomic_DNA"/>
</dbReference>
<dbReference type="RefSeq" id="WP_011137716.1">
    <property type="nucleotide sequence ID" value="NC_005085.1"/>
</dbReference>
<dbReference type="SMR" id="Q7NQG9"/>
<dbReference type="STRING" id="243365.CV_4169"/>
<dbReference type="GeneID" id="66366359"/>
<dbReference type="KEGG" id="cvi:CV_4169"/>
<dbReference type="eggNOG" id="COG0098">
    <property type="taxonomic scope" value="Bacteria"/>
</dbReference>
<dbReference type="HOGENOM" id="CLU_065898_2_2_4"/>
<dbReference type="OrthoDB" id="9809045at2"/>
<dbReference type="Proteomes" id="UP000001424">
    <property type="component" value="Chromosome"/>
</dbReference>
<dbReference type="GO" id="GO:0015935">
    <property type="term" value="C:small ribosomal subunit"/>
    <property type="evidence" value="ECO:0007669"/>
    <property type="project" value="InterPro"/>
</dbReference>
<dbReference type="GO" id="GO:0019843">
    <property type="term" value="F:rRNA binding"/>
    <property type="evidence" value="ECO:0007669"/>
    <property type="project" value="UniProtKB-UniRule"/>
</dbReference>
<dbReference type="GO" id="GO:0003735">
    <property type="term" value="F:structural constituent of ribosome"/>
    <property type="evidence" value="ECO:0007669"/>
    <property type="project" value="InterPro"/>
</dbReference>
<dbReference type="GO" id="GO:0006412">
    <property type="term" value="P:translation"/>
    <property type="evidence" value="ECO:0007669"/>
    <property type="project" value="UniProtKB-UniRule"/>
</dbReference>
<dbReference type="FunFam" id="3.30.160.20:FF:000001">
    <property type="entry name" value="30S ribosomal protein S5"/>
    <property type="match status" value="1"/>
</dbReference>
<dbReference type="FunFam" id="3.30.230.10:FF:000002">
    <property type="entry name" value="30S ribosomal protein S5"/>
    <property type="match status" value="1"/>
</dbReference>
<dbReference type="Gene3D" id="3.30.160.20">
    <property type="match status" value="1"/>
</dbReference>
<dbReference type="Gene3D" id="3.30.230.10">
    <property type="match status" value="1"/>
</dbReference>
<dbReference type="HAMAP" id="MF_01307_B">
    <property type="entry name" value="Ribosomal_uS5_B"/>
    <property type="match status" value="1"/>
</dbReference>
<dbReference type="InterPro" id="IPR020568">
    <property type="entry name" value="Ribosomal_Su5_D2-typ_SF"/>
</dbReference>
<dbReference type="InterPro" id="IPR000851">
    <property type="entry name" value="Ribosomal_uS5"/>
</dbReference>
<dbReference type="InterPro" id="IPR005712">
    <property type="entry name" value="Ribosomal_uS5_bac-type"/>
</dbReference>
<dbReference type="InterPro" id="IPR005324">
    <property type="entry name" value="Ribosomal_uS5_C"/>
</dbReference>
<dbReference type="InterPro" id="IPR013810">
    <property type="entry name" value="Ribosomal_uS5_N"/>
</dbReference>
<dbReference type="InterPro" id="IPR018192">
    <property type="entry name" value="Ribosomal_uS5_N_CS"/>
</dbReference>
<dbReference type="InterPro" id="IPR014721">
    <property type="entry name" value="Ribsml_uS5_D2-typ_fold_subgr"/>
</dbReference>
<dbReference type="NCBIfam" id="TIGR01021">
    <property type="entry name" value="rpsE_bact"/>
    <property type="match status" value="1"/>
</dbReference>
<dbReference type="PANTHER" id="PTHR48277">
    <property type="entry name" value="MITOCHONDRIAL RIBOSOMAL PROTEIN S5"/>
    <property type="match status" value="1"/>
</dbReference>
<dbReference type="PANTHER" id="PTHR48277:SF1">
    <property type="entry name" value="MITOCHONDRIAL RIBOSOMAL PROTEIN S5"/>
    <property type="match status" value="1"/>
</dbReference>
<dbReference type="Pfam" id="PF00333">
    <property type="entry name" value="Ribosomal_S5"/>
    <property type="match status" value="1"/>
</dbReference>
<dbReference type="Pfam" id="PF03719">
    <property type="entry name" value="Ribosomal_S5_C"/>
    <property type="match status" value="1"/>
</dbReference>
<dbReference type="SUPFAM" id="SSF54768">
    <property type="entry name" value="dsRNA-binding domain-like"/>
    <property type="match status" value="1"/>
</dbReference>
<dbReference type="SUPFAM" id="SSF54211">
    <property type="entry name" value="Ribosomal protein S5 domain 2-like"/>
    <property type="match status" value="1"/>
</dbReference>
<dbReference type="PROSITE" id="PS00585">
    <property type="entry name" value="RIBOSOMAL_S5"/>
    <property type="match status" value="1"/>
</dbReference>
<dbReference type="PROSITE" id="PS50881">
    <property type="entry name" value="S5_DSRBD"/>
    <property type="match status" value="1"/>
</dbReference>
<evidence type="ECO:0000255" key="1">
    <source>
        <dbReference type="HAMAP-Rule" id="MF_01307"/>
    </source>
</evidence>
<evidence type="ECO:0000305" key="2"/>